<reference key="1">
    <citation type="submission" date="2002-04" db="EMBL/GenBank/DDBJ databases">
        <title>Isolation and characterization of cDNA for macaque neurological disease genes.</title>
        <authorList>
            <person name="Kusuda J."/>
            <person name="Osada N."/>
            <person name="Hida M."/>
            <person name="Sugano S."/>
            <person name="Hashimoto K."/>
        </authorList>
    </citation>
    <scope>NUCLEOTIDE SEQUENCE [LARGE SCALE MRNA]</scope>
    <source>
        <tissue>Temporal cortex</tissue>
    </source>
</reference>
<dbReference type="EC" id="2.3.1.155" evidence="2"/>
<dbReference type="EC" id="2.3.1.16" evidence="2"/>
<dbReference type="EMBL" id="AB083315">
    <property type="protein sequence ID" value="BAC20594.1"/>
    <property type="molecule type" value="mRNA"/>
</dbReference>
<dbReference type="RefSeq" id="XP_005576408.2">
    <property type="nucleotide sequence ID" value="XM_005576351.2"/>
</dbReference>
<dbReference type="RefSeq" id="XP_045225578.1">
    <property type="nucleotide sequence ID" value="XM_045369643.2"/>
</dbReference>
<dbReference type="RefSeq" id="XP_045225579.1">
    <property type="nucleotide sequence ID" value="XM_045369644.2"/>
</dbReference>
<dbReference type="RefSeq" id="XP_045225580.1">
    <property type="nucleotide sequence ID" value="XM_045369645.2"/>
</dbReference>
<dbReference type="SMR" id="Q8HXX4"/>
<dbReference type="STRING" id="9541.ENSMFAP00000016446"/>
<dbReference type="Ensembl" id="ENSMFAT00000066981.2">
    <property type="protein sequence ID" value="ENSMFAP00000016448.2"/>
    <property type="gene ID" value="ENSMFAG00000031252.2"/>
</dbReference>
<dbReference type="GeneID" id="102143422"/>
<dbReference type="eggNOG" id="KOG1392">
    <property type="taxonomic scope" value="Eukaryota"/>
</dbReference>
<dbReference type="GeneTree" id="ENSGT01030000234626"/>
<dbReference type="UniPathway" id="UPA00659"/>
<dbReference type="Proteomes" id="UP000233100">
    <property type="component" value="Chromosome 13"/>
</dbReference>
<dbReference type="Bgee" id="ENSMFAG00000031252">
    <property type="expression patterns" value="Expressed in heart and 13 other cell types or tissues"/>
</dbReference>
<dbReference type="GO" id="GO:0005783">
    <property type="term" value="C:endoplasmic reticulum"/>
    <property type="evidence" value="ECO:0000250"/>
    <property type="project" value="UniProtKB"/>
</dbReference>
<dbReference type="GO" id="GO:0005743">
    <property type="term" value="C:mitochondrial inner membrane"/>
    <property type="evidence" value="ECO:0000250"/>
    <property type="project" value="UniProtKB"/>
</dbReference>
<dbReference type="GO" id="GO:0005741">
    <property type="term" value="C:mitochondrial outer membrane"/>
    <property type="evidence" value="ECO:0000250"/>
    <property type="project" value="UniProtKB"/>
</dbReference>
<dbReference type="GO" id="GO:0003988">
    <property type="term" value="F:acetyl-CoA C-acyltransferase activity"/>
    <property type="evidence" value="ECO:0007669"/>
    <property type="project" value="UniProtKB-EC"/>
</dbReference>
<dbReference type="GO" id="GO:0050633">
    <property type="term" value="F:acetyl-CoA C-myristoyltransferase activity"/>
    <property type="evidence" value="ECO:0007669"/>
    <property type="project" value="UniProtKB-EC"/>
</dbReference>
<dbReference type="GO" id="GO:0006635">
    <property type="term" value="P:fatty acid beta-oxidation"/>
    <property type="evidence" value="ECO:0007669"/>
    <property type="project" value="UniProtKB-UniPathway"/>
</dbReference>
<dbReference type="CDD" id="cd00751">
    <property type="entry name" value="thiolase"/>
    <property type="match status" value="1"/>
</dbReference>
<dbReference type="FunFam" id="3.40.47.10:FF:000020">
    <property type="entry name" value="Putative trifunctional enzyme subunit beta mitochondrial"/>
    <property type="match status" value="1"/>
</dbReference>
<dbReference type="Gene3D" id="3.40.47.10">
    <property type="match status" value="1"/>
</dbReference>
<dbReference type="InterPro" id="IPR002155">
    <property type="entry name" value="Thiolase"/>
</dbReference>
<dbReference type="InterPro" id="IPR016039">
    <property type="entry name" value="Thiolase-like"/>
</dbReference>
<dbReference type="InterPro" id="IPR020615">
    <property type="entry name" value="Thiolase_acyl_enz_int_AS"/>
</dbReference>
<dbReference type="InterPro" id="IPR020610">
    <property type="entry name" value="Thiolase_AS"/>
</dbReference>
<dbReference type="InterPro" id="IPR020617">
    <property type="entry name" value="Thiolase_C"/>
</dbReference>
<dbReference type="InterPro" id="IPR020613">
    <property type="entry name" value="Thiolase_CS"/>
</dbReference>
<dbReference type="InterPro" id="IPR020616">
    <property type="entry name" value="Thiolase_N"/>
</dbReference>
<dbReference type="NCBIfam" id="TIGR01930">
    <property type="entry name" value="AcCoA-C-Actrans"/>
    <property type="match status" value="1"/>
</dbReference>
<dbReference type="PANTHER" id="PTHR18919">
    <property type="entry name" value="ACETYL-COA C-ACYLTRANSFERASE"/>
    <property type="match status" value="1"/>
</dbReference>
<dbReference type="PANTHER" id="PTHR18919:SF153">
    <property type="entry name" value="TRIFUNCTIONAL ENZYME SUBUNIT BETA, MITOCHONDRIAL"/>
    <property type="match status" value="1"/>
</dbReference>
<dbReference type="Pfam" id="PF02803">
    <property type="entry name" value="Thiolase_C"/>
    <property type="match status" value="1"/>
</dbReference>
<dbReference type="Pfam" id="PF00108">
    <property type="entry name" value="Thiolase_N"/>
    <property type="match status" value="1"/>
</dbReference>
<dbReference type="SUPFAM" id="SSF53901">
    <property type="entry name" value="Thiolase-like"/>
    <property type="match status" value="2"/>
</dbReference>
<dbReference type="PROSITE" id="PS00098">
    <property type="entry name" value="THIOLASE_1"/>
    <property type="match status" value="1"/>
</dbReference>
<dbReference type="PROSITE" id="PS00737">
    <property type="entry name" value="THIOLASE_2"/>
    <property type="match status" value="1"/>
</dbReference>
<dbReference type="PROSITE" id="PS00099">
    <property type="entry name" value="THIOLASE_3"/>
    <property type="match status" value="1"/>
</dbReference>
<feature type="transit peptide" description="Mitochondrion" evidence="1">
    <location>
        <begin position="1"/>
        <end position="34"/>
    </location>
</feature>
<feature type="chain" id="PRO_0000034081" description="Trifunctional enzyme subunit beta, mitochondrial">
    <location>
        <begin position="35"/>
        <end position="475"/>
    </location>
</feature>
<feature type="intramembrane region" evidence="2">
    <location>
        <begin position="174"/>
        <end position="221"/>
    </location>
</feature>
<feature type="active site" description="Acyl-thioester intermediate" evidence="2">
    <location>
        <position position="139"/>
    </location>
</feature>
<feature type="active site" description="Proton donor/acceptor" evidence="2">
    <location>
        <position position="459"/>
    </location>
</feature>
<feature type="site" description="Increases nucleophilicity of active site Cys" evidence="2">
    <location>
        <position position="429"/>
    </location>
</feature>
<feature type="modified residue" description="N6-acetyllysine; alternate" evidence="2">
    <location>
        <position position="73"/>
    </location>
</feature>
<feature type="modified residue" description="N6-succinyllysine; alternate" evidence="4">
    <location>
        <position position="73"/>
    </location>
</feature>
<feature type="modified residue" description="N6-acetyllysine; alternate" evidence="2">
    <location>
        <position position="189"/>
    </location>
</feature>
<feature type="modified residue" description="N6-succinyllysine; alternate" evidence="4">
    <location>
        <position position="189"/>
    </location>
</feature>
<feature type="modified residue" description="N6-succinyllysine" evidence="4">
    <location>
        <position position="191"/>
    </location>
</feature>
<feature type="modified residue" description="N6-succinyllysine" evidence="4">
    <location>
        <position position="273"/>
    </location>
</feature>
<feature type="modified residue" description="N6-succinyllysine" evidence="4">
    <location>
        <position position="292"/>
    </location>
</feature>
<feature type="modified residue" description="N6-acetyllysine; alternate" evidence="4">
    <location>
        <position position="294"/>
    </location>
</feature>
<feature type="modified residue" description="N6-succinyllysine; alternate" evidence="4">
    <location>
        <position position="294"/>
    </location>
</feature>
<feature type="modified residue" description="N6-acetyllysine" evidence="4">
    <location>
        <position position="299"/>
    </location>
</feature>
<feature type="modified residue" description="N6-acetyllysine; alternate" evidence="4">
    <location>
        <position position="333"/>
    </location>
</feature>
<feature type="modified residue" description="N6-succinyllysine; alternate" evidence="4">
    <location>
        <position position="333"/>
    </location>
</feature>
<feature type="modified residue" description="N6-acetyllysine" evidence="4">
    <location>
        <position position="349"/>
    </location>
</feature>
<feature type="modified residue" description="N6-acetyllysine" evidence="4">
    <location>
        <position position="362"/>
    </location>
</feature>
<gene>
    <name type="primary">HADHB</name>
    <name type="ORF">QtrA-13435</name>
</gene>
<proteinExistence type="evidence at transcript level"/>
<protein>
    <recommendedName>
        <fullName>Trifunctional enzyme subunit beta, mitochondrial</fullName>
    </recommendedName>
    <alternativeName>
        <fullName>TP-beta</fullName>
    </alternativeName>
    <domain>
        <recommendedName>
            <fullName>3-ketoacyl-CoA thiolase</fullName>
            <ecNumber evidence="2">2.3.1.155</ecNumber>
            <ecNumber evidence="2">2.3.1.16</ecNumber>
        </recommendedName>
        <alternativeName>
            <fullName>Acetyl-CoA acyltransferase</fullName>
        </alternativeName>
        <alternativeName>
            <fullName>Beta-ketothiolase</fullName>
        </alternativeName>
    </domain>
</protein>
<sequence length="475" mass="51356">MTTILTCPFKKLPTTSKWALRFAIRPLSCSSQLRAAPAVQTKTKKTLAKPNIRNVVVVDGVRTPFLLSGTSYKDLMPHDLARAALTGLLHRTSVPKEVVDYIIFGTVIQEVKTSNVAREAALGAGFSDKTPAHTVTMACISANQAMTTGVGLIASGQCDVIVAGGVELMSDIPIRHSRKMRKLMLDLNKAKSMGQRLSLISKFRLNFLAPELPAVAEFSTSETMGHSADRLAAAFAVSRLEQDEYALRSHSLAKKAQDEGLLSDVVPFRVPGKDTVTKDNGIRPSSLEQMAKLKPAFIKPYGTVTAANSSFLTDGASAMLIMAEEKALAMGYKPKAYLRDFMYVSQDPKDQLLLGPTYATPKVLEKAGLTMNDIDAFEFHEAFSGQILANFKAMDSDWFAENYMGRKTKVGLPPLEKFNNWGGSLSLGHPFGATGCRLVMAAANRLRKEGGQYGLVAACAAGGQGHAMIVEAYPK</sequence>
<accession>Q8HXX4</accession>
<organism>
    <name type="scientific">Macaca fascicularis</name>
    <name type="common">Crab-eating macaque</name>
    <name type="synonym">Cynomolgus monkey</name>
    <dbReference type="NCBI Taxonomy" id="9541"/>
    <lineage>
        <taxon>Eukaryota</taxon>
        <taxon>Metazoa</taxon>
        <taxon>Chordata</taxon>
        <taxon>Craniata</taxon>
        <taxon>Vertebrata</taxon>
        <taxon>Euteleostomi</taxon>
        <taxon>Mammalia</taxon>
        <taxon>Eutheria</taxon>
        <taxon>Euarchontoglires</taxon>
        <taxon>Primates</taxon>
        <taxon>Haplorrhini</taxon>
        <taxon>Catarrhini</taxon>
        <taxon>Cercopithecidae</taxon>
        <taxon>Cercopithecinae</taxon>
        <taxon>Macaca</taxon>
    </lineage>
</organism>
<comment type="function">
    <text evidence="2">Mitochondrial trifunctional enzyme catalyzes the last three of the four reactions of the mitochondrial beta-oxidation pathway. The mitochondrial beta-oxidation pathway is the major energy-producing process in tissues and is performed through four consecutive reactions breaking down fatty acids into acetyl-CoA. Among the enzymes involved in this pathway, the trifunctional enzyme exhibits specificity for long-chain fatty acids. Mitochondrial trifunctional enzyme is a heterotetrameric complex composed of two proteins, the trifunctional enzyme subunit alpha/HADHA carries the 2,3-enoyl-CoA hydratase and the 3-hydroxyacyl-CoA dehydrogenase activities, while the trifunctional enzyme subunit beta/HADHB described here bears the 3-ketoacyl-CoA thiolase activity.</text>
</comment>
<comment type="catalytic activity">
    <reaction evidence="2">
        <text>an acyl-CoA + acetyl-CoA = a 3-oxoacyl-CoA + CoA</text>
        <dbReference type="Rhea" id="RHEA:21564"/>
        <dbReference type="ChEBI" id="CHEBI:57287"/>
        <dbReference type="ChEBI" id="CHEBI:57288"/>
        <dbReference type="ChEBI" id="CHEBI:58342"/>
        <dbReference type="ChEBI" id="CHEBI:90726"/>
        <dbReference type="EC" id="2.3.1.16"/>
    </reaction>
    <physiologicalReaction direction="right-to-left" evidence="2">
        <dbReference type="Rhea" id="RHEA:21566"/>
    </physiologicalReaction>
</comment>
<comment type="catalytic activity">
    <reaction evidence="2">
        <text>butanoyl-CoA + acetyl-CoA = 3-oxohexanoyl-CoA + CoA</text>
        <dbReference type="Rhea" id="RHEA:31111"/>
        <dbReference type="ChEBI" id="CHEBI:57287"/>
        <dbReference type="ChEBI" id="CHEBI:57288"/>
        <dbReference type="ChEBI" id="CHEBI:57371"/>
        <dbReference type="ChEBI" id="CHEBI:62418"/>
    </reaction>
    <physiologicalReaction direction="right-to-left" evidence="2">
        <dbReference type="Rhea" id="RHEA:31113"/>
    </physiologicalReaction>
</comment>
<comment type="catalytic activity">
    <reaction evidence="2">
        <text>hexanoyl-CoA + acetyl-CoA = 3-oxooctanoyl-CoA + CoA</text>
        <dbReference type="Rhea" id="RHEA:31203"/>
        <dbReference type="ChEBI" id="CHEBI:57287"/>
        <dbReference type="ChEBI" id="CHEBI:57288"/>
        <dbReference type="ChEBI" id="CHEBI:62619"/>
        <dbReference type="ChEBI" id="CHEBI:62620"/>
    </reaction>
    <physiologicalReaction direction="right-to-left" evidence="2">
        <dbReference type="Rhea" id="RHEA:31205"/>
    </physiologicalReaction>
</comment>
<comment type="catalytic activity">
    <reaction evidence="2">
        <text>octanoyl-CoA + acetyl-CoA = 3-oxodecanoyl-CoA + CoA</text>
        <dbReference type="Rhea" id="RHEA:31087"/>
        <dbReference type="ChEBI" id="CHEBI:57287"/>
        <dbReference type="ChEBI" id="CHEBI:57288"/>
        <dbReference type="ChEBI" id="CHEBI:57386"/>
        <dbReference type="ChEBI" id="CHEBI:62548"/>
    </reaction>
    <physiologicalReaction direction="right-to-left" evidence="2">
        <dbReference type="Rhea" id="RHEA:31089"/>
    </physiologicalReaction>
</comment>
<comment type="catalytic activity">
    <reaction evidence="2">
        <text>decanoyl-CoA + acetyl-CoA = 3-oxododecanoyl-CoA + CoA</text>
        <dbReference type="Rhea" id="RHEA:31183"/>
        <dbReference type="ChEBI" id="CHEBI:57287"/>
        <dbReference type="ChEBI" id="CHEBI:57288"/>
        <dbReference type="ChEBI" id="CHEBI:61430"/>
        <dbReference type="ChEBI" id="CHEBI:62615"/>
    </reaction>
    <physiologicalReaction direction="right-to-left" evidence="2">
        <dbReference type="Rhea" id="RHEA:31185"/>
    </physiologicalReaction>
</comment>
<comment type="catalytic activity">
    <reaction evidence="2">
        <text>dodecanoyl-CoA + acetyl-CoA = 3-oxotetradecanoyl-CoA + CoA</text>
        <dbReference type="Rhea" id="RHEA:31091"/>
        <dbReference type="ChEBI" id="CHEBI:57287"/>
        <dbReference type="ChEBI" id="CHEBI:57288"/>
        <dbReference type="ChEBI" id="CHEBI:57375"/>
        <dbReference type="ChEBI" id="CHEBI:62543"/>
    </reaction>
    <physiologicalReaction direction="right-to-left" evidence="2">
        <dbReference type="Rhea" id="RHEA:31093"/>
    </physiologicalReaction>
</comment>
<comment type="catalytic activity">
    <reaction evidence="2">
        <text>tetradecanoyl-CoA + acetyl-CoA = 3-oxohexadecanoyl-CoA + CoA</text>
        <dbReference type="Rhea" id="RHEA:18161"/>
        <dbReference type="ChEBI" id="CHEBI:57287"/>
        <dbReference type="ChEBI" id="CHEBI:57288"/>
        <dbReference type="ChEBI" id="CHEBI:57349"/>
        <dbReference type="ChEBI" id="CHEBI:57385"/>
        <dbReference type="EC" id="2.3.1.155"/>
    </reaction>
    <physiologicalReaction direction="right-to-left" evidence="2">
        <dbReference type="Rhea" id="RHEA:18163"/>
    </physiologicalReaction>
</comment>
<comment type="pathway">
    <text evidence="2">Lipid metabolism; fatty acid beta-oxidation.</text>
</comment>
<comment type="subunit">
    <text evidence="2 3">Heterotetramer of 2 alpha/HADHA and 2 beta/HADHB subunits; forms the mitochondrial trifunctional enzyme. Also purified as higher order heterooligomers including a 4 alpha/HADHA and 4 beta/HADHB heterooligomer which physiological significance remains unclear. The mitochondrial trifunctional enzyme interacts with MTLN. Interacts with RSAD2/viperin.</text>
</comment>
<comment type="subcellular location">
    <subcellularLocation>
        <location evidence="2">Mitochondrion</location>
    </subcellularLocation>
    <subcellularLocation>
        <location evidence="2">Mitochondrion inner membrane</location>
    </subcellularLocation>
    <subcellularLocation>
        <location evidence="2">Mitochondrion outer membrane</location>
    </subcellularLocation>
    <subcellularLocation>
        <location evidence="2">Endoplasmic reticulum</location>
    </subcellularLocation>
    <text evidence="2">Protein stability and association with membranes require HADHA.</text>
</comment>
<comment type="similarity">
    <text evidence="5">Belongs to the thiolase-like superfamily. Thiolase family.</text>
</comment>
<keyword id="KW-0007">Acetylation</keyword>
<keyword id="KW-0012">Acyltransferase</keyword>
<keyword id="KW-0256">Endoplasmic reticulum</keyword>
<keyword id="KW-0276">Fatty acid metabolism</keyword>
<keyword id="KW-0443">Lipid metabolism</keyword>
<keyword id="KW-0472">Membrane</keyword>
<keyword id="KW-0496">Mitochondrion</keyword>
<keyword id="KW-0999">Mitochondrion inner membrane</keyword>
<keyword id="KW-1000">Mitochondrion outer membrane</keyword>
<keyword id="KW-1185">Reference proteome</keyword>
<keyword id="KW-0808">Transferase</keyword>
<keyword id="KW-0809">Transit peptide</keyword>
<name>ECHB_MACFA</name>
<evidence type="ECO:0000250" key="1"/>
<evidence type="ECO:0000250" key="2">
    <source>
        <dbReference type="UniProtKB" id="P55084"/>
    </source>
</evidence>
<evidence type="ECO:0000250" key="3">
    <source>
        <dbReference type="UniProtKB" id="Q8BMS1"/>
    </source>
</evidence>
<evidence type="ECO:0000250" key="4">
    <source>
        <dbReference type="UniProtKB" id="Q99JY0"/>
    </source>
</evidence>
<evidence type="ECO:0000305" key="5"/>